<dbReference type="EMBL" id="CP000886">
    <property type="protein sequence ID" value="ABX69568.1"/>
    <property type="molecule type" value="Genomic_DNA"/>
</dbReference>
<dbReference type="RefSeq" id="WP_000008119.1">
    <property type="nucleotide sequence ID" value="NC_010102.1"/>
</dbReference>
<dbReference type="SMR" id="A9N8B5"/>
<dbReference type="KEGG" id="spq:SPAB_04251"/>
<dbReference type="PATRIC" id="fig|1016998.12.peg.3998"/>
<dbReference type="HOGENOM" id="CLU_095787_0_0_6"/>
<dbReference type="BioCyc" id="SENT1016998:SPAB_RS17285-MONOMER"/>
<dbReference type="Proteomes" id="UP000008556">
    <property type="component" value="Chromosome"/>
</dbReference>
<dbReference type="GO" id="GO:0005886">
    <property type="term" value="C:plasma membrane"/>
    <property type="evidence" value="ECO:0007669"/>
    <property type="project" value="UniProtKB-SubCell"/>
</dbReference>
<dbReference type="GO" id="GO:0008381">
    <property type="term" value="F:mechanosensitive monoatomic ion channel activity"/>
    <property type="evidence" value="ECO:0007669"/>
    <property type="project" value="UniProtKB-UniRule"/>
</dbReference>
<dbReference type="FunFam" id="1.10.1200.120:FF:000001">
    <property type="entry name" value="Large-conductance mechanosensitive channel"/>
    <property type="match status" value="1"/>
</dbReference>
<dbReference type="Gene3D" id="1.10.1200.120">
    <property type="entry name" value="Large-conductance mechanosensitive channel, MscL, domain 1"/>
    <property type="match status" value="1"/>
</dbReference>
<dbReference type="HAMAP" id="MF_00115">
    <property type="entry name" value="MscL"/>
    <property type="match status" value="1"/>
</dbReference>
<dbReference type="InterPro" id="IPR019823">
    <property type="entry name" value="Mechanosensitive_channel_CS"/>
</dbReference>
<dbReference type="InterPro" id="IPR001185">
    <property type="entry name" value="MS_channel"/>
</dbReference>
<dbReference type="InterPro" id="IPR037673">
    <property type="entry name" value="MSC/AndL"/>
</dbReference>
<dbReference type="InterPro" id="IPR036019">
    <property type="entry name" value="MscL_channel"/>
</dbReference>
<dbReference type="NCBIfam" id="TIGR00220">
    <property type="entry name" value="mscL"/>
    <property type="match status" value="1"/>
</dbReference>
<dbReference type="NCBIfam" id="NF001841">
    <property type="entry name" value="PRK00567.1-1"/>
    <property type="match status" value="1"/>
</dbReference>
<dbReference type="NCBIfam" id="NF001843">
    <property type="entry name" value="PRK00567.1-4"/>
    <property type="match status" value="1"/>
</dbReference>
<dbReference type="PANTHER" id="PTHR30266:SF2">
    <property type="entry name" value="LARGE-CONDUCTANCE MECHANOSENSITIVE CHANNEL"/>
    <property type="match status" value="1"/>
</dbReference>
<dbReference type="PANTHER" id="PTHR30266">
    <property type="entry name" value="MECHANOSENSITIVE CHANNEL MSCL"/>
    <property type="match status" value="1"/>
</dbReference>
<dbReference type="Pfam" id="PF01741">
    <property type="entry name" value="MscL"/>
    <property type="match status" value="1"/>
</dbReference>
<dbReference type="PRINTS" id="PR01264">
    <property type="entry name" value="MECHCHANNEL"/>
</dbReference>
<dbReference type="SUPFAM" id="SSF81330">
    <property type="entry name" value="Gated mechanosensitive channel"/>
    <property type="match status" value="1"/>
</dbReference>
<dbReference type="PROSITE" id="PS01327">
    <property type="entry name" value="MSCL"/>
    <property type="match status" value="1"/>
</dbReference>
<gene>
    <name evidence="1" type="primary">mscL</name>
    <name type="ordered locus">SPAB_04251</name>
</gene>
<feature type="chain" id="PRO_1000076046" description="Large-conductance mechanosensitive channel">
    <location>
        <begin position="1"/>
        <end position="137"/>
    </location>
</feature>
<feature type="transmembrane region" description="Helical" evidence="1">
    <location>
        <begin position="10"/>
        <end position="30"/>
    </location>
</feature>
<feature type="transmembrane region" description="Helical" evidence="1">
    <location>
        <begin position="76"/>
        <end position="96"/>
    </location>
</feature>
<sequence length="137" mass="15074">MSFIKEFREFAMRGNVVDLAVGVIIGAAFGKIVSSLVADIIMPPLGLLIGGIDFKQFAFTLREAQGDIPAVVMHYGVFIQNVFDFVIVAFAIFVAIKLINRLNRKKAEEPAAPPAPSKEEVLLGEIRDLLKEQNNRS</sequence>
<protein>
    <recommendedName>
        <fullName evidence="1">Large-conductance mechanosensitive channel</fullName>
    </recommendedName>
</protein>
<proteinExistence type="inferred from homology"/>
<keyword id="KW-0997">Cell inner membrane</keyword>
<keyword id="KW-1003">Cell membrane</keyword>
<keyword id="KW-0407">Ion channel</keyword>
<keyword id="KW-0406">Ion transport</keyword>
<keyword id="KW-0472">Membrane</keyword>
<keyword id="KW-0812">Transmembrane</keyword>
<keyword id="KW-1133">Transmembrane helix</keyword>
<keyword id="KW-0813">Transport</keyword>
<reference key="1">
    <citation type="submission" date="2007-11" db="EMBL/GenBank/DDBJ databases">
        <authorList>
            <consortium name="The Salmonella enterica serovar Paratyphi B Genome Sequencing Project"/>
            <person name="McClelland M."/>
            <person name="Sanderson E.K."/>
            <person name="Porwollik S."/>
            <person name="Spieth J."/>
            <person name="Clifton W.S."/>
            <person name="Fulton R."/>
            <person name="Cordes M."/>
            <person name="Wollam A."/>
            <person name="Shah N."/>
            <person name="Pepin K."/>
            <person name="Bhonagiri V."/>
            <person name="Nash W."/>
            <person name="Johnson M."/>
            <person name="Thiruvilangam P."/>
            <person name="Wilson R."/>
        </authorList>
    </citation>
    <scope>NUCLEOTIDE SEQUENCE [LARGE SCALE GENOMIC DNA]</scope>
    <source>
        <strain>ATCC BAA-1250 / SPB7</strain>
    </source>
</reference>
<evidence type="ECO:0000255" key="1">
    <source>
        <dbReference type="HAMAP-Rule" id="MF_00115"/>
    </source>
</evidence>
<name>MSCL_SALPB</name>
<comment type="function">
    <text evidence="1">Channel that opens in response to stretch forces in the membrane lipid bilayer. May participate in the regulation of osmotic pressure changes within the cell.</text>
</comment>
<comment type="subunit">
    <text evidence="1">Homopentamer.</text>
</comment>
<comment type="subcellular location">
    <subcellularLocation>
        <location evidence="1">Cell inner membrane</location>
        <topology evidence="1">Multi-pass membrane protein</topology>
    </subcellularLocation>
</comment>
<comment type="similarity">
    <text evidence="1">Belongs to the MscL family.</text>
</comment>
<organism>
    <name type="scientific">Salmonella paratyphi B (strain ATCC BAA-1250 / SPB7)</name>
    <dbReference type="NCBI Taxonomy" id="1016998"/>
    <lineage>
        <taxon>Bacteria</taxon>
        <taxon>Pseudomonadati</taxon>
        <taxon>Pseudomonadota</taxon>
        <taxon>Gammaproteobacteria</taxon>
        <taxon>Enterobacterales</taxon>
        <taxon>Enterobacteriaceae</taxon>
        <taxon>Salmonella</taxon>
    </lineage>
</organism>
<accession>A9N8B5</accession>